<reference key="1">
    <citation type="journal article" date="2001" name="Nature">
        <title>Genome sequence of Yersinia pestis, the causative agent of plague.</title>
        <authorList>
            <person name="Parkhill J."/>
            <person name="Wren B.W."/>
            <person name="Thomson N.R."/>
            <person name="Titball R.W."/>
            <person name="Holden M.T.G."/>
            <person name="Prentice M.B."/>
            <person name="Sebaihia M."/>
            <person name="James K.D."/>
            <person name="Churcher C.M."/>
            <person name="Mungall K.L."/>
            <person name="Baker S."/>
            <person name="Basham D."/>
            <person name="Bentley S.D."/>
            <person name="Brooks K."/>
            <person name="Cerdeno-Tarraga A.-M."/>
            <person name="Chillingworth T."/>
            <person name="Cronin A."/>
            <person name="Davies R.M."/>
            <person name="Davis P."/>
            <person name="Dougan G."/>
            <person name="Feltwell T."/>
            <person name="Hamlin N."/>
            <person name="Holroyd S."/>
            <person name="Jagels K."/>
            <person name="Karlyshev A.V."/>
            <person name="Leather S."/>
            <person name="Moule S."/>
            <person name="Oyston P.C.F."/>
            <person name="Quail M.A."/>
            <person name="Rutherford K.M."/>
            <person name="Simmonds M."/>
            <person name="Skelton J."/>
            <person name="Stevens K."/>
            <person name="Whitehead S."/>
            <person name="Barrell B.G."/>
        </authorList>
    </citation>
    <scope>NUCLEOTIDE SEQUENCE [LARGE SCALE GENOMIC DNA]</scope>
    <source>
        <strain>CO-92 / Biovar Orientalis</strain>
    </source>
</reference>
<reference key="2">
    <citation type="journal article" date="2002" name="J. Bacteriol.">
        <title>Genome sequence of Yersinia pestis KIM.</title>
        <authorList>
            <person name="Deng W."/>
            <person name="Burland V."/>
            <person name="Plunkett G. III"/>
            <person name="Boutin A."/>
            <person name="Mayhew G.F."/>
            <person name="Liss P."/>
            <person name="Perna N.T."/>
            <person name="Rose D.J."/>
            <person name="Mau B."/>
            <person name="Zhou S."/>
            <person name="Schwartz D.C."/>
            <person name="Fetherston J.D."/>
            <person name="Lindler L.E."/>
            <person name="Brubaker R.R."/>
            <person name="Plano G.V."/>
            <person name="Straley S.C."/>
            <person name="McDonough K.A."/>
            <person name="Nilles M.L."/>
            <person name="Matson J.S."/>
            <person name="Blattner F.R."/>
            <person name="Perry R.D."/>
        </authorList>
    </citation>
    <scope>NUCLEOTIDE SEQUENCE [LARGE SCALE GENOMIC DNA]</scope>
    <source>
        <strain>KIM10+ / Biovar Mediaevalis</strain>
    </source>
</reference>
<reference key="3">
    <citation type="journal article" date="2004" name="DNA Res.">
        <title>Complete genome sequence of Yersinia pestis strain 91001, an isolate avirulent to humans.</title>
        <authorList>
            <person name="Song Y."/>
            <person name="Tong Z."/>
            <person name="Wang J."/>
            <person name="Wang L."/>
            <person name="Guo Z."/>
            <person name="Han Y."/>
            <person name="Zhang J."/>
            <person name="Pei D."/>
            <person name="Zhou D."/>
            <person name="Qin H."/>
            <person name="Pang X."/>
            <person name="Han Y."/>
            <person name="Zhai J."/>
            <person name="Li M."/>
            <person name="Cui B."/>
            <person name="Qi Z."/>
            <person name="Jin L."/>
            <person name="Dai R."/>
            <person name="Chen F."/>
            <person name="Li S."/>
            <person name="Ye C."/>
            <person name="Du Z."/>
            <person name="Lin W."/>
            <person name="Wang J."/>
            <person name="Yu J."/>
            <person name="Yang H."/>
            <person name="Wang J."/>
            <person name="Huang P."/>
            <person name="Yang R."/>
        </authorList>
    </citation>
    <scope>NUCLEOTIDE SEQUENCE [LARGE SCALE GENOMIC DNA]</scope>
    <source>
        <strain>91001 / Biovar Mediaevalis</strain>
    </source>
</reference>
<name>CYSC_YERPE</name>
<comment type="function">
    <text>Catalyzes the synthesis of activated sulfate.</text>
</comment>
<comment type="catalytic activity">
    <reaction evidence="1">
        <text>adenosine 5'-phosphosulfate + ATP = 3'-phosphoadenylyl sulfate + ADP + H(+)</text>
        <dbReference type="Rhea" id="RHEA:24152"/>
        <dbReference type="ChEBI" id="CHEBI:15378"/>
        <dbReference type="ChEBI" id="CHEBI:30616"/>
        <dbReference type="ChEBI" id="CHEBI:58243"/>
        <dbReference type="ChEBI" id="CHEBI:58339"/>
        <dbReference type="ChEBI" id="CHEBI:456216"/>
        <dbReference type="EC" id="2.7.1.25"/>
    </reaction>
</comment>
<comment type="pathway">
    <text evidence="1">Sulfur metabolism; hydrogen sulfide biosynthesis; sulfite from sulfate: step 2/3.</text>
</comment>
<comment type="similarity">
    <text evidence="1">Belongs to the APS kinase family.</text>
</comment>
<comment type="sequence caution" evidence="3">
    <conflict type="erroneous initiation">
        <sequence resource="EMBL-CDS" id="AAM84410"/>
    </conflict>
</comment>
<comment type="sequence caution" evidence="3">
    <conflict type="erroneous initiation">
        <sequence resource="EMBL-CDS" id="AAS60596"/>
    </conflict>
</comment>
<proteinExistence type="inferred from homology"/>
<dbReference type="EC" id="2.7.1.25" evidence="1"/>
<dbReference type="EMBL" id="AL590842">
    <property type="protein sequence ID" value="CAL21953.1"/>
    <property type="molecule type" value="Genomic_DNA"/>
</dbReference>
<dbReference type="EMBL" id="AE009952">
    <property type="protein sequence ID" value="AAM84410.1"/>
    <property type="status" value="ALT_INIT"/>
    <property type="molecule type" value="Genomic_DNA"/>
</dbReference>
<dbReference type="EMBL" id="AE017042">
    <property type="protein sequence ID" value="AAS60596.1"/>
    <property type="status" value="ALT_INIT"/>
    <property type="molecule type" value="Genomic_DNA"/>
</dbReference>
<dbReference type="PIR" id="AF0408">
    <property type="entry name" value="AF0408"/>
</dbReference>
<dbReference type="RefSeq" id="WP_002209388.1">
    <property type="nucleotide sequence ID" value="NZ_WUCM01000008.1"/>
</dbReference>
<dbReference type="RefSeq" id="YP_002348257.1">
    <property type="nucleotide sequence ID" value="NC_003143.1"/>
</dbReference>
<dbReference type="SMR" id="Q8ZBP3"/>
<dbReference type="STRING" id="214092.YPO3364"/>
<dbReference type="PaxDb" id="214092-YPO3364"/>
<dbReference type="DNASU" id="1145772"/>
<dbReference type="EnsemblBacteria" id="AAS60596">
    <property type="protein sequence ID" value="AAS60596"/>
    <property type="gene ID" value="YP_0323"/>
</dbReference>
<dbReference type="GeneID" id="57975345"/>
<dbReference type="KEGG" id="ype:YPO3364"/>
<dbReference type="KEGG" id="ypk:y0825"/>
<dbReference type="KEGG" id="ypm:YP_0323"/>
<dbReference type="PATRIC" id="fig|214092.21.peg.3841"/>
<dbReference type="eggNOG" id="COG0529">
    <property type="taxonomic scope" value="Bacteria"/>
</dbReference>
<dbReference type="HOGENOM" id="CLU_046932_1_0_6"/>
<dbReference type="OMA" id="HENTVEE"/>
<dbReference type="OrthoDB" id="9804504at2"/>
<dbReference type="UniPathway" id="UPA00140">
    <property type="reaction ID" value="UER00205"/>
</dbReference>
<dbReference type="Proteomes" id="UP000000815">
    <property type="component" value="Chromosome"/>
</dbReference>
<dbReference type="Proteomes" id="UP000001019">
    <property type="component" value="Chromosome"/>
</dbReference>
<dbReference type="Proteomes" id="UP000002490">
    <property type="component" value="Chromosome"/>
</dbReference>
<dbReference type="GO" id="GO:0004020">
    <property type="term" value="F:adenylylsulfate kinase activity"/>
    <property type="evidence" value="ECO:0000318"/>
    <property type="project" value="GO_Central"/>
</dbReference>
<dbReference type="GO" id="GO:0005524">
    <property type="term" value="F:ATP binding"/>
    <property type="evidence" value="ECO:0007669"/>
    <property type="project" value="UniProtKB-UniRule"/>
</dbReference>
<dbReference type="GO" id="GO:0070814">
    <property type="term" value="P:hydrogen sulfide biosynthetic process"/>
    <property type="evidence" value="ECO:0007669"/>
    <property type="project" value="UniProtKB-UniRule"/>
</dbReference>
<dbReference type="GO" id="GO:0000103">
    <property type="term" value="P:sulfate assimilation"/>
    <property type="evidence" value="ECO:0000318"/>
    <property type="project" value="GO_Central"/>
</dbReference>
<dbReference type="CDD" id="cd02027">
    <property type="entry name" value="APSK"/>
    <property type="match status" value="1"/>
</dbReference>
<dbReference type="FunFam" id="3.40.50.300:FF:000212">
    <property type="entry name" value="Adenylyl-sulfate kinase"/>
    <property type="match status" value="1"/>
</dbReference>
<dbReference type="Gene3D" id="3.40.50.300">
    <property type="entry name" value="P-loop containing nucleotide triphosphate hydrolases"/>
    <property type="match status" value="1"/>
</dbReference>
<dbReference type="HAMAP" id="MF_00065">
    <property type="entry name" value="Adenylyl_sulf_kinase"/>
    <property type="match status" value="1"/>
</dbReference>
<dbReference type="InterPro" id="IPR002891">
    <property type="entry name" value="APS_kinase"/>
</dbReference>
<dbReference type="InterPro" id="IPR027417">
    <property type="entry name" value="P-loop_NTPase"/>
</dbReference>
<dbReference type="NCBIfam" id="TIGR00455">
    <property type="entry name" value="apsK"/>
    <property type="match status" value="1"/>
</dbReference>
<dbReference type="NCBIfam" id="NF003013">
    <property type="entry name" value="PRK03846.1"/>
    <property type="match status" value="1"/>
</dbReference>
<dbReference type="PANTHER" id="PTHR11055:SF63">
    <property type="entry name" value="ADENYLYL-SULFATE KINASE 1, CHLOROPLASTIC"/>
    <property type="match status" value="1"/>
</dbReference>
<dbReference type="PANTHER" id="PTHR11055">
    <property type="entry name" value="BIFUNCTIONAL 3'-PHOSPHOADENOSINE 5'-PHOSPHOSULFATE SYNTHASE"/>
    <property type="match status" value="1"/>
</dbReference>
<dbReference type="Pfam" id="PF01583">
    <property type="entry name" value="APS_kinase"/>
    <property type="match status" value="1"/>
</dbReference>
<dbReference type="SUPFAM" id="SSF52540">
    <property type="entry name" value="P-loop containing nucleoside triphosphate hydrolases"/>
    <property type="match status" value="1"/>
</dbReference>
<organism>
    <name type="scientific">Yersinia pestis</name>
    <dbReference type="NCBI Taxonomy" id="632"/>
    <lineage>
        <taxon>Bacteria</taxon>
        <taxon>Pseudomonadati</taxon>
        <taxon>Pseudomonadota</taxon>
        <taxon>Gammaproteobacteria</taxon>
        <taxon>Enterobacterales</taxon>
        <taxon>Yersiniaceae</taxon>
        <taxon>Yersinia</taxon>
    </lineage>
</organism>
<protein>
    <recommendedName>
        <fullName evidence="1">Adenylyl-sulfate kinase</fullName>
        <ecNumber evidence="1">2.7.1.25</ecNumber>
    </recommendedName>
    <alternativeName>
        <fullName evidence="1">APS kinase</fullName>
    </alternativeName>
    <alternativeName>
        <fullName evidence="1">ATP adenosine-5'-phosphosulfate 3'-phosphotransferase</fullName>
    </alternativeName>
    <alternativeName>
        <fullName evidence="1">Adenosine-5'-phosphosulfate kinase</fullName>
    </alternativeName>
</protein>
<keyword id="KW-0067">ATP-binding</keyword>
<keyword id="KW-0418">Kinase</keyword>
<keyword id="KW-0547">Nucleotide-binding</keyword>
<keyword id="KW-0597">Phosphoprotein</keyword>
<keyword id="KW-1185">Reference proteome</keyword>
<keyword id="KW-0808">Transferase</keyword>
<sequence length="213" mass="23632">MPAHQLDDHNQETRSDDENIVWHPHAITRQDREQQHGHQGVVLWFTGLSGSGKSTLAGALEQALFARGVSTYLLDGDNVRHGLCRDLGFSDADRRENIRRVGEVAKLMVDAGLVVLTAFISPHRAERKMVQDMLASGQFIEVFVDTPLAICEARDPKGLYKKARAGELKNFTGIDSVYESPASPDIHLQGEQLVTNLIEQLLDVLRGRAIIKS</sequence>
<evidence type="ECO:0000255" key="1">
    <source>
        <dbReference type="HAMAP-Rule" id="MF_00065"/>
    </source>
</evidence>
<evidence type="ECO:0000256" key="2">
    <source>
        <dbReference type="SAM" id="MobiDB-lite"/>
    </source>
</evidence>
<evidence type="ECO:0000305" key="3"/>
<feature type="chain" id="PRO_0000105927" description="Adenylyl-sulfate kinase">
    <location>
        <begin position="1"/>
        <end position="213"/>
    </location>
</feature>
<feature type="region of interest" description="Disordered" evidence="2">
    <location>
        <begin position="1"/>
        <end position="20"/>
    </location>
</feature>
<feature type="compositionally biased region" description="Basic and acidic residues" evidence="2">
    <location>
        <begin position="1"/>
        <end position="17"/>
    </location>
</feature>
<feature type="active site" description="Phosphoserine intermediate" evidence="1">
    <location>
        <position position="121"/>
    </location>
</feature>
<feature type="binding site" evidence="1">
    <location>
        <begin position="47"/>
        <end position="54"/>
    </location>
    <ligand>
        <name>ATP</name>
        <dbReference type="ChEBI" id="CHEBI:30616"/>
    </ligand>
</feature>
<accession>Q8ZBP3</accession>
<accession>Q0WBT1</accession>
<gene>
    <name evidence="1" type="primary">cysC</name>
    <name type="ordered locus">YPO3364</name>
    <name type="ordered locus">y0825</name>
    <name type="ordered locus">YP_0323</name>
</gene>